<gene>
    <name type="primary">MT-ND4L</name>
    <name type="synonym">MTND4L</name>
    <name type="synonym">NADH4L</name>
    <name type="synonym">ND4L</name>
</gene>
<reference key="1">
    <citation type="journal article" date="2006" name="Genes Genet. Syst.">
        <title>Phylogenetic analysis of diprotodontian marsupials based on complete mitochondrial genomes.</title>
        <authorList>
            <person name="Munemasa M."/>
            <person name="Nikaido M."/>
            <person name="Donnellan S."/>
            <person name="Austin C.C."/>
            <person name="Okada N."/>
            <person name="Hasegawa M."/>
        </authorList>
    </citation>
    <scope>NUCLEOTIDE SEQUENCE [GENOMIC DNA]</scope>
    <source>
        <tissue>Liver</tissue>
    </source>
</reference>
<accession>Q1MWH8</accession>
<organism>
    <name type="scientific">Dactylopsila trivirgata</name>
    <name type="common">Striped possum</name>
    <dbReference type="NCBI Taxonomy" id="38616"/>
    <lineage>
        <taxon>Eukaryota</taxon>
        <taxon>Metazoa</taxon>
        <taxon>Chordata</taxon>
        <taxon>Craniata</taxon>
        <taxon>Vertebrata</taxon>
        <taxon>Euteleostomi</taxon>
        <taxon>Mammalia</taxon>
        <taxon>Metatheria</taxon>
        <taxon>Diprotodontia</taxon>
        <taxon>Petauridae</taxon>
        <taxon>Dactylopsila</taxon>
    </lineage>
</organism>
<dbReference type="EC" id="7.1.1.2"/>
<dbReference type="EMBL" id="AB241054">
    <property type="protein sequence ID" value="BAE93988.1"/>
    <property type="molecule type" value="Genomic_DNA"/>
</dbReference>
<dbReference type="RefSeq" id="YP_637031.1">
    <property type="nucleotide sequence ID" value="NC_008134.1"/>
</dbReference>
<dbReference type="SMR" id="Q1MWH8"/>
<dbReference type="GeneID" id="4108292"/>
<dbReference type="CTD" id="4539"/>
<dbReference type="GO" id="GO:0005743">
    <property type="term" value="C:mitochondrial inner membrane"/>
    <property type="evidence" value="ECO:0000250"/>
    <property type="project" value="UniProtKB"/>
</dbReference>
<dbReference type="GO" id="GO:0045271">
    <property type="term" value="C:respiratory chain complex I"/>
    <property type="evidence" value="ECO:0000250"/>
    <property type="project" value="UniProtKB"/>
</dbReference>
<dbReference type="GO" id="GO:0008137">
    <property type="term" value="F:NADH dehydrogenase (ubiquinone) activity"/>
    <property type="evidence" value="ECO:0000250"/>
    <property type="project" value="UniProtKB"/>
</dbReference>
<dbReference type="GO" id="GO:0042773">
    <property type="term" value="P:ATP synthesis coupled electron transport"/>
    <property type="evidence" value="ECO:0007669"/>
    <property type="project" value="InterPro"/>
</dbReference>
<dbReference type="FunFam" id="1.10.287.3510:FF:000002">
    <property type="entry name" value="NADH-ubiquinone oxidoreductase chain 4L"/>
    <property type="match status" value="1"/>
</dbReference>
<dbReference type="Gene3D" id="1.10.287.3510">
    <property type="match status" value="1"/>
</dbReference>
<dbReference type="InterPro" id="IPR001133">
    <property type="entry name" value="NADH_UbQ_OxRdtase_chain4L/K"/>
</dbReference>
<dbReference type="InterPro" id="IPR039428">
    <property type="entry name" value="NUOK/Mnh_C1-like"/>
</dbReference>
<dbReference type="PANTHER" id="PTHR11434:SF0">
    <property type="entry name" value="NADH-UBIQUINONE OXIDOREDUCTASE CHAIN 4L"/>
    <property type="match status" value="1"/>
</dbReference>
<dbReference type="PANTHER" id="PTHR11434">
    <property type="entry name" value="NADH-UBIQUINONE OXIDOREDUCTASE SUBUNIT ND4L"/>
    <property type="match status" value="1"/>
</dbReference>
<dbReference type="Pfam" id="PF00420">
    <property type="entry name" value="Oxidored_q2"/>
    <property type="match status" value="1"/>
</dbReference>
<geneLocation type="mitochondrion"/>
<comment type="function">
    <text evidence="1">Core subunit of the mitochondrial membrane respiratory chain NADH dehydrogenase (Complex I) which catalyzes electron transfer from NADH through the respiratory chain, using ubiquinone as an electron acceptor. Part of the enzyme membrane arm which is embedded in the lipid bilayer and involved in proton translocation.</text>
</comment>
<comment type="catalytic activity">
    <reaction evidence="1">
        <text>a ubiquinone + NADH + 5 H(+)(in) = a ubiquinol + NAD(+) + 4 H(+)(out)</text>
        <dbReference type="Rhea" id="RHEA:29091"/>
        <dbReference type="Rhea" id="RHEA-COMP:9565"/>
        <dbReference type="Rhea" id="RHEA-COMP:9566"/>
        <dbReference type="ChEBI" id="CHEBI:15378"/>
        <dbReference type="ChEBI" id="CHEBI:16389"/>
        <dbReference type="ChEBI" id="CHEBI:17976"/>
        <dbReference type="ChEBI" id="CHEBI:57540"/>
        <dbReference type="ChEBI" id="CHEBI:57945"/>
        <dbReference type="EC" id="7.1.1.2"/>
    </reaction>
    <physiologicalReaction direction="left-to-right" evidence="1">
        <dbReference type="Rhea" id="RHEA:29092"/>
    </physiologicalReaction>
</comment>
<comment type="subunit">
    <text evidence="2">Core subunit of respiratory chain NADH dehydrogenase (Complex I) which is composed of 45 different subunits.</text>
</comment>
<comment type="subcellular location">
    <subcellularLocation>
        <location evidence="2">Mitochondrion inner membrane</location>
        <topology evidence="3">Multi-pass membrane protein</topology>
    </subcellularLocation>
</comment>
<comment type="similarity">
    <text evidence="4">Belongs to the complex I subunit 4L family.</text>
</comment>
<protein>
    <recommendedName>
        <fullName>NADH-ubiquinone oxidoreductase chain 4L</fullName>
        <ecNumber>7.1.1.2</ecNumber>
    </recommendedName>
    <alternativeName>
        <fullName>NADH dehydrogenase subunit 4L</fullName>
    </alternativeName>
</protein>
<proteinExistence type="inferred from homology"/>
<feature type="chain" id="PRO_0000275004" description="NADH-ubiquinone oxidoreductase chain 4L">
    <location>
        <begin position="1"/>
        <end position="98"/>
    </location>
</feature>
<feature type="transmembrane region" description="Helical" evidence="3">
    <location>
        <begin position="1"/>
        <end position="21"/>
    </location>
</feature>
<feature type="transmembrane region" description="Helical" evidence="3">
    <location>
        <begin position="28"/>
        <end position="48"/>
    </location>
</feature>
<feature type="transmembrane region" description="Helical" evidence="3">
    <location>
        <begin position="59"/>
        <end position="79"/>
    </location>
</feature>
<name>NU4LM_DACTR</name>
<keyword id="KW-0249">Electron transport</keyword>
<keyword id="KW-0472">Membrane</keyword>
<keyword id="KW-0496">Mitochondrion</keyword>
<keyword id="KW-0999">Mitochondrion inner membrane</keyword>
<keyword id="KW-0520">NAD</keyword>
<keyword id="KW-0679">Respiratory chain</keyword>
<keyword id="KW-1278">Translocase</keyword>
<keyword id="KW-0812">Transmembrane</keyword>
<keyword id="KW-1133">Transmembrane helix</keyword>
<keyword id="KW-0813">Transport</keyword>
<keyword id="KW-0830">Ubiquinone</keyword>
<evidence type="ECO:0000250" key="1">
    <source>
        <dbReference type="UniProtKB" id="P03901"/>
    </source>
</evidence>
<evidence type="ECO:0000250" key="2">
    <source>
        <dbReference type="UniProtKB" id="P03902"/>
    </source>
</evidence>
<evidence type="ECO:0000255" key="3"/>
<evidence type="ECO:0000305" key="4"/>
<sequence>MTSINLNLTMAFSLALTGVLVYRSHLMSTLLCLEGMMLSLFILMALLISHSHMFSVSMAPLILLVFSACEAGVGLALLVKISTNYGNDYVQNLNLLQC</sequence>